<organism>
    <name type="scientific">Streptococcus pyogenes serotype M1</name>
    <dbReference type="NCBI Taxonomy" id="301447"/>
    <lineage>
        <taxon>Bacteria</taxon>
        <taxon>Bacillati</taxon>
        <taxon>Bacillota</taxon>
        <taxon>Bacilli</taxon>
        <taxon>Lactobacillales</taxon>
        <taxon>Streptococcaceae</taxon>
        <taxon>Streptococcus</taxon>
    </lineage>
</organism>
<protein>
    <recommendedName>
        <fullName evidence="2">Large ribosomal subunit protein bL32</fullName>
    </recommendedName>
    <alternativeName>
        <fullName>50S ribosomal protein L32</fullName>
    </alternativeName>
</protein>
<reference key="1">
    <citation type="journal article" date="2001" name="Proc. Natl. Acad. Sci. U.S.A.">
        <title>Complete genome sequence of an M1 strain of Streptococcus pyogenes.</title>
        <authorList>
            <person name="Ferretti J.J."/>
            <person name="McShan W.M."/>
            <person name="Ajdic D.J."/>
            <person name="Savic D.J."/>
            <person name="Savic G."/>
            <person name="Lyon K."/>
            <person name="Primeaux C."/>
            <person name="Sezate S."/>
            <person name="Suvorov A.N."/>
            <person name="Kenton S."/>
            <person name="Lai H.S."/>
            <person name="Lin S.P."/>
            <person name="Qian Y."/>
            <person name="Jia H.G."/>
            <person name="Najar F.Z."/>
            <person name="Ren Q."/>
            <person name="Zhu H."/>
            <person name="Song L."/>
            <person name="White J."/>
            <person name="Yuan X."/>
            <person name="Clifton S.W."/>
            <person name="Roe B.A."/>
            <person name="McLaughlin R.E."/>
        </authorList>
    </citation>
    <scope>NUCLEOTIDE SEQUENCE [LARGE SCALE GENOMIC DNA]</scope>
    <source>
        <strain>ATCC 700294 / SF370 / Serotype M1</strain>
    </source>
</reference>
<reference key="2">
    <citation type="submission" date="2014-04" db="EMBL/GenBank/DDBJ databases">
        <authorList>
            <person name="Beres S.B."/>
            <person name="Musser J.M."/>
        </authorList>
    </citation>
    <scope>SEQUENCE REVISION</scope>
</reference>
<reference key="3">
    <citation type="journal article" date="2005" name="J. Infect. Dis.">
        <title>Evolutionary origin and emergence of a highly successful clone of serotype M1 group A Streptococcus involved multiple horizontal gene transfer events.</title>
        <authorList>
            <person name="Sumby P."/>
            <person name="Porcella S.F."/>
            <person name="Madrigal A.G."/>
            <person name="Barbian K.D."/>
            <person name="Virtaneva K."/>
            <person name="Ricklefs S.M."/>
            <person name="Sturdevant D.E."/>
            <person name="Graham M.R."/>
            <person name="Vuopio-Varkila J."/>
            <person name="Hoe N.P."/>
            <person name="Musser J.M."/>
        </authorList>
    </citation>
    <scope>NUCLEOTIDE SEQUENCE [LARGE SCALE GENOMIC DNA]</scope>
    <source>
        <strain>ATCC BAA-947 / MGAS5005 / Serotype M1</strain>
    </source>
</reference>
<sequence>MAVPARHTSKAKKNKRRTHYKLTAPSVQFDETTGDYSRSHRVSLKGYYKGRKIAKANEAK</sequence>
<comment type="similarity">
    <text evidence="2">Belongs to the bacterial ribosomal protein bL32 family.</text>
</comment>
<evidence type="ECO:0000256" key="1">
    <source>
        <dbReference type="SAM" id="MobiDB-lite"/>
    </source>
</evidence>
<evidence type="ECO:0000305" key="2"/>
<name>RL32_STRP1</name>
<gene>
    <name type="primary">rpmF</name>
    <name type="ordered locus">SPy_2159</name>
    <name type="ordered locus">M5005_Spy1815</name>
</gene>
<keyword id="KW-1185">Reference proteome</keyword>
<keyword id="KW-0687">Ribonucleoprotein</keyword>
<keyword id="KW-0689">Ribosomal protein</keyword>
<feature type="chain" id="PRO_0000172417" description="Large ribosomal subunit protein bL32">
    <location>
        <begin position="1"/>
        <end position="60"/>
    </location>
</feature>
<feature type="region of interest" description="Disordered" evidence="1">
    <location>
        <begin position="1"/>
        <end position="22"/>
    </location>
</feature>
<feature type="compositionally biased region" description="Basic residues" evidence="1">
    <location>
        <begin position="7"/>
        <end position="20"/>
    </location>
</feature>
<dbReference type="EMBL" id="AE004092">
    <property type="protein sequence ID" value="AAK34795.2"/>
    <property type="molecule type" value="Genomic_DNA"/>
</dbReference>
<dbReference type="EMBL" id="CP000017">
    <property type="protein sequence ID" value="AAZ52433.1"/>
    <property type="molecule type" value="Genomic_DNA"/>
</dbReference>
<dbReference type="RefSeq" id="NP_270074.2">
    <property type="nucleotide sequence ID" value="NC_002737.2"/>
</dbReference>
<dbReference type="SMR" id="Q99XK8"/>
<dbReference type="PaxDb" id="1314-HKU360_01928"/>
<dbReference type="KEGG" id="spy:SPy_2159"/>
<dbReference type="KEGG" id="spz:M5005_Spy1815"/>
<dbReference type="PATRIC" id="fig|160490.10.peg.1870"/>
<dbReference type="HOGENOM" id="CLU_129084_2_3_9"/>
<dbReference type="PRO" id="PR:Q99XK8"/>
<dbReference type="Proteomes" id="UP000000750">
    <property type="component" value="Chromosome"/>
</dbReference>
<dbReference type="GO" id="GO:0015934">
    <property type="term" value="C:large ribosomal subunit"/>
    <property type="evidence" value="ECO:0007669"/>
    <property type="project" value="InterPro"/>
</dbReference>
<dbReference type="GO" id="GO:0003735">
    <property type="term" value="F:structural constituent of ribosome"/>
    <property type="evidence" value="ECO:0007669"/>
    <property type="project" value="InterPro"/>
</dbReference>
<dbReference type="GO" id="GO:0006412">
    <property type="term" value="P:translation"/>
    <property type="evidence" value="ECO:0007669"/>
    <property type="project" value="UniProtKB-UniRule"/>
</dbReference>
<dbReference type="HAMAP" id="MF_00340">
    <property type="entry name" value="Ribosomal_bL32"/>
    <property type="match status" value="1"/>
</dbReference>
<dbReference type="InterPro" id="IPR002677">
    <property type="entry name" value="Ribosomal_bL32"/>
</dbReference>
<dbReference type="InterPro" id="IPR044957">
    <property type="entry name" value="Ribosomal_bL32_bact"/>
</dbReference>
<dbReference type="InterPro" id="IPR011332">
    <property type="entry name" value="Ribosomal_zn-bd"/>
</dbReference>
<dbReference type="NCBIfam" id="TIGR01031">
    <property type="entry name" value="rpmF_bact"/>
    <property type="match status" value="1"/>
</dbReference>
<dbReference type="PANTHER" id="PTHR35534">
    <property type="entry name" value="50S RIBOSOMAL PROTEIN L32"/>
    <property type="match status" value="1"/>
</dbReference>
<dbReference type="PANTHER" id="PTHR35534:SF1">
    <property type="entry name" value="LARGE RIBOSOMAL SUBUNIT PROTEIN BL32"/>
    <property type="match status" value="1"/>
</dbReference>
<dbReference type="Pfam" id="PF01783">
    <property type="entry name" value="Ribosomal_L32p"/>
    <property type="match status" value="1"/>
</dbReference>
<dbReference type="SUPFAM" id="SSF57829">
    <property type="entry name" value="Zn-binding ribosomal proteins"/>
    <property type="match status" value="1"/>
</dbReference>
<accession>Q99XK8</accession>
<accession>Q48W42</accession>
<proteinExistence type="inferred from homology"/>